<keyword id="KW-0002">3D-structure</keyword>
<keyword id="KW-0051">Antiviral defense</keyword>
<keyword id="KW-0238">DNA-binding</keyword>
<keyword id="KW-0678">Repressor</keyword>
<keyword id="KW-0804">Transcription</keyword>
<keyword id="KW-0805">Transcription regulation</keyword>
<accession>A0A8X6EH27</accession>
<dbReference type="EMBL" id="LDVT01000024">
    <property type="protein sequence ID" value="KOQ78018.1"/>
    <property type="molecule type" value="Genomic_DNA"/>
</dbReference>
<dbReference type="PDB" id="7TB6">
    <property type="method" value="X-ray"/>
    <property type="resolution" value="1.89 A"/>
    <property type="chains" value="A=1-299"/>
</dbReference>
<dbReference type="PDBsum" id="7TB6"/>
<dbReference type="SMR" id="A0A8X6EH27"/>
<dbReference type="GO" id="GO:0003677">
    <property type="term" value="F:DNA binding"/>
    <property type="evidence" value="ECO:0007669"/>
    <property type="project" value="UniProtKB-KW"/>
</dbReference>
<dbReference type="GO" id="GO:0051607">
    <property type="term" value="P:defense response to virus"/>
    <property type="evidence" value="ECO:0007669"/>
    <property type="project" value="UniProtKB-KW"/>
</dbReference>
<dbReference type="InterPro" id="IPR016634">
    <property type="entry name" value="CapW-like"/>
</dbReference>
<dbReference type="InterPro" id="IPR051534">
    <property type="entry name" value="CBASS_pafABC_assoc_protein"/>
</dbReference>
<dbReference type="InterPro" id="IPR026881">
    <property type="entry name" value="WYL_dom"/>
</dbReference>
<dbReference type="PANTHER" id="PTHR34580">
    <property type="match status" value="1"/>
</dbReference>
<dbReference type="PANTHER" id="PTHR34580:SF3">
    <property type="entry name" value="PROTEIN PAFB"/>
    <property type="match status" value="1"/>
</dbReference>
<dbReference type="Pfam" id="PF13280">
    <property type="entry name" value="WYL"/>
    <property type="match status" value="1"/>
</dbReference>
<dbReference type="PIRSF" id="PIRSF015558">
    <property type="entry name" value="Txn_reg_DeoR_prd"/>
    <property type="match status" value="1"/>
</dbReference>
<dbReference type="PROSITE" id="PS52050">
    <property type="entry name" value="WYL"/>
    <property type="match status" value="1"/>
</dbReference>
<evidence type="ECO:0000250" key="1">
    <source>
        <dbReference type="UniProtKB" id="P0DX76"/>
    </source>
</evidence>
<evidence type="ECO:0000255" key="2">
    <source>
        <dbReference type="PROSITE-ProRule" id="PRU01395"/>
    </source>
</evidence>
<evidence type="ECO:0000269" key="3">
    <source>
    </source>
</evidence>
<evidence type="ECO:0000303" key="4">
    <source>
    </source>
</evidence>
<evidence type="ECO:0000305" key="5"/>
<evidence type="ECO:0000305" key="6">
    <source>
    </source>
</evidence>
<evidence type="ECO:0000312" key="7">
    <source>
        <dbReference type="EMBL" id="KOQ78018.1"/>
    </source>
</evidence>
<evidence type="ECO:0000312" key="8">
    <source>
        <dbReference type="PDB" id="7TB6"/>
    </source>
</evidence>
<sequence length="299" mass="34421">MESSGSSKVRWGQNRRLNFIDVRLQYDGRINRSDLMQFFDISAPQASADLGLYQQLAGDNLVYDTRQRIYLATPEFKPITKRSEATRYLNELQRLARGIVEPDESFVGYQPSTGVVVSPSRAIEADEVATLLRAIRDRVALRVRYQSMDAPEPQEWVLSPHALGFDGLRWHARAWCHARQVFRDFAIGRLDVLEHVFSAKPVDPLLDEGWNNEVTVSLVPHPGLTPSQRRVVMRDYGMVDGHCELRCRKAMLFYTLRHLNLESLAISDVPAQQHVVVENAEEVKQWMREDRDGLQHLRR</sequence>
<gene>
    <name evidence="4" type="primary">capW</name>
    <name evidence="7" type="ORF">ABW45_08315</name>
    <name type="ORF">Ga0112290_102441</name>
</gene>
<reference key="1">
    <citation type="journal article" date="2015" name="PeerJ">
        <title>Comparative genomics of non-pseudomonal bacterial species colonising paediatric cystic fibrosis patients.</title>
        <authorList>
            <person name="Ormerod K.L."/>
            <person name="George N.M."/>
            <person name="Fraser J.A."/>
            <person name="Wainwright C."/>
            <person name="Hugenholtz P."/>
        </authorList>
    </citation>
    <scope>NUCLEOTIDE SEQUENCE [LARGE SCALE GENOMIC DNA]</scope>
    <source>
        <strain>C11</strain>
    </source>
</reference>
<reference evidence="8" key="2">
    <citation type="journal article" date="2022" name="Nucleic Acids Res.">
        <title>Control of bacterial immune signaling by a WYL domain transcription factor.</title>
        <authorList>
            <person name="Blankenchip C.L."/>
            <person name="Nguyen J.V."/>
            <person name="Lau R.K."/>
            <person name="Ye Q."/>
            <person name="Gu Y."/>
            <person name="Corbett K.D."/>
        </authorList>
    </citation>
    <scope>X-RAY CRYSTALLOGRAPHY (1.89 ANGSTROMS)</scope>
    <scope>PROBABLE FUNCTION AS A TRANSCRIPTIONAL REPRESSOR</scope>
    <scope>SUBUNIT</scope>
    <scope>DOMAIN</scope>
    <scope>DNA-BINDING</scope>
    <scope>MUTAGENESIS OF ARG-32; 42-SER--SER-47; SER-147; ARG-179; ARG-183; GLU-194 AND ASP-235</scope>
    <source>
        <strain>C11</strain>
    </source>
</reference>
<organism evidence="8">
    <name type="scientific">Stenotrophomonas maltophilia</name>
    <name type="common">Pseudomonas maltophilia</name>
    <name type="synonym">Xanthomonas maltophilia</name>
    <dbReference type="NCBI Taxonomy" id="40324"/>
    <lineage>
        <taxon>Bacteria</taxon>
        <taxon>Pseudomonadati</taxon>
        <taxon>Pseudomonadota</taxon>
        <taxon>Gammaproteobacteria</taxon>
        <taxon>Lysobacterales</taxon>
        <taxon>Lysobacteraceae</taxon>
        <taxon>Stenotrophomonas</taxon>
        <taxon>Stenotrophomonas maltophilia group</taxon>
    </lineage>
</organism>
<proteinExistence type="evidence at protein level"/>
<protein>
    <recommendedName>
        <fullName evidence="5">DNA-binding transcriptional repressor CapW</fullName>
    </recommendedName>
    <alternativeName>
        <fullName evidence="4">CBASS-associated protein with WYL domain</fullName>
        <shortName evidence="4">CapW</shortName>
        <shortName evidence="4">Sm CapW</shortName>
    </alternativeName>
</protein>
<comment type="function">
    <text evidence="3 4 6">Transcriptional regulator of a CBASS antivirus system (Probable). CBASS (cyclic oligonucleotide-based antiphage signaling system) provides immunity against bacteriophage (PubMed:35536256). The CD-NTase protein synthesizes cyclic nucleotides in response to infection; these serve as specific second messenger signals (PubMed:35536256). The signals activate a diverse range of effectors, leading to bacterial cell death and thus abortive phage infection (PubMed:35536256). A type III CBASS system, part of a CapW-Cap6-Cap8-Cap7-CdnC-NucC locus (PubMed:35536256). Binds specifically to palindromes that overlap the -10 site in the promoter of cap6, found beween found between the genes for divergently transcribed capW and cap6 (cognate DNA) (PubMed:35536256). Probably represses transcription bidirectionally from the promoter (PubMed:35536256). Mutations that make it a constitutive repressor in E.coli do not change DNA-binding affinity (Probable) (PubMed:35536256).</text>
</comment>
<comment type="subunit">
    <text evidence="3">Homodimer (PubMed:35536256).</text>
</comment>
<comment type="induction">
    <text evidence="1">Represses its own transcription.</text>
</comment>
<comment type="domain">
    <text evidence="3">Has an N-terminal winged HTH domain, a central WYL domain and a C-terminal WCX domain; the WYL domain of each subunit reaches into the other subunit to form swapped domains.</text>
</comment>
<name>CAPW_STEMA</name>
<feature type="chain" id="PRO_0000459333" description="DNA-binding transcriptional repressor CapW">
    <location>
        <begin position="1"/>
        <end position="299"/>
    </location>
</feature>
<feature type="domain" description="WYL" evidence="2">
    <location>
        <begin position="120"/>
        <end position="200"/>
    </location>
</feature>
<feature type="region of interest" description="Winged HTH domain" evidence="3">
    <location>
        <begin position="1"/>
        <end position="84"/>
    </location>
</feature>
<feature type="region of interest" description="WYL domain" evidence="3">
    <location>
        <begin position="85"/>
        <end position="196"/>
    </location>
</feature>
<feature type="region of interest" description="Probable ligand-binding region" evidence="6">
    <location>
        <begin position="145"/>
        <end position="189"/>
    </location>
</feature>
<feature type="region of interest" description="WCX domain" evidence="3">
    <location>
        <begin position="197"/>
        <end position="299"/>
    </location>
</feature>
<feature type="mutagenesis site" description="No longer binds cognate promoter DNA." evidence="3">
    <original>R</original>
    <variation>A</variation>
    <location>
        <position position="32"/>
    </location>
</feature>
<feature type="mutagenesis site" description="No longer binds cognate promoter DNA." evidence="3">
    <original>SAPQAS</original>
    <variation>AAPAAA</variation>
    <location>
        <begin position="42"/>
        <end position="47"/>
    </location>
</feature>
<feature type="mutagenesis site" description="No change in promoter DNA affinity." evidence="3">
    <original>S</original>
    <variation>E</variation>
    <variation>K</variation>
    <location>
        <position position="147"/>
    </location>
</feature>
<feature type="mutagenesis site" description="No change in promoter DNA affinity." evidence="3">
    <original>R</original>
    <variation>A</variation>
    <location>
        <position position="179"/>
    </location>
</feature>
<feature type="mutagenesis site" description="No change in promoter DNA affinity." evidence="3">
    <original>R</original>
    <variation>A</variation>
    <location>
        <position position="183"/>
    </location>
</feature>
<feature type="mutagenesis site" description="No change in promoter DNA affinity." evidence="3">
    <original>E</original>
    <variation>A</variation>
    <location>
        <position position="194"/>
    </location>
</feature>
<feature type="mutagenesis site" description="No change in promoter DNA affinity." evidence="3">
    <original>D</original>
    <variation>A</variation>
    <location>
        <position position="235"/>
    </location>
</feature>